<protein>
    <recommendedName>
        <fullName>Sodium/potassium-transporting ATPase subunit beta-2</fullName>
    </recommendedName>
    <alternativeName>
        <fullName>Beta-B1 chain</fullName>
    </alternativeName>
    <alternativeName>
        <fullName>Sodium/potassium-dependent ATPase beta-2 subunit</fullName>
    </alternativeName>
</protein>
<feature type="chain" id="PRO_0000219118" description="Sodium/potassium-transporting ATPase subunit beta-2">
    <location>
        <begin position="1"/>
        <end position="299"/>
    </location>
</feature>
<feature type="topological domain" description="Cytoplasmic" evidence="2">
    <location>
        <begin position="1"/>
        <end position="36"/>
    </location>
</feature>
<feature type="transmembrane region" description="Helical; Signal-anchor for type II membrane protein" evidence="2">
    <location>
        <begin position="37"/>
        <end position="57"/>
    </location>
</feature>
<feature type="topological domain" description="Extracellular" evidence="2">
    <location>
        <begin position="58"/>
        <end position="299"/>
    </location>
</feature>
<feature type="glycosylation site" description="N-linked (GlcNAc...) asparagine" evidence="2">
    <location>
        <position position="101"/>
    </location>
</feature>
<feature type="glycosylation site" description="N-linked (GlcNAc...) asparagine" evidence="2">
    <location>
        <position position="119"/>
    </location>
</feature>
<feature type="glycosylation site" description="N-linked (GlcNAc...) asparagine" evidence="2">
    <location>
        <position position="199"/>
    </location>
</feature>
<feature type="glycosylation site" description="N-linked (GlcNAc...) asparagine" evidence="2">
    <location>
        <position position="226"/>
    </location>
</feature>
<feature type="glycosylation site" description="N-linked (GlcNAc...) asparagine" evidence="2">
    <location>
        <position position="247"/>
    </location>
</feature>
<feature type="glycosylation site" description="N-linked (GlcNAc...) asparagine" evidence="2">
    <location>
        <position position="259"/>
    </location>
</feature>
<feature type="disulfide bond" evidence="1">
    <location>
        <begin position="130"/>
        <end position="152"/>
    </location>
</feature>
<feature type="disulfide bond" evidence="1">
    <location>
        <begin position="162"/>
        <end position="178"/>
    </location>
</feature>
<feature type="disulfide bond" evidence="1">
    <location>
        <begin position="206"/>
        <end position="270"/>
    </location>
</feature>
<proteinExistence type="evidence at transcript level"/>
<dbReference type="EMBL" id="Z25812">
    <property type="protein sequence ID" value="CAA81060.1"/>
    <property type="molecule type" value="mRNA"/>
</dbReference>
<dbReference type="PIR" id="S39267">
    <property type="entry name" value="S39267"/>
</dbReference>
<dbReference type="SMR" id="P43002"/>
<dbReference type="GO" id="GO:0005890">
    <property type="term" value="C:sodium:potassium-exchanging ATPase complex"/>
    <property type="evidence" value="ECO:0007669"/>
    <property type="project" value="InterPro"/>
</dbReference>
<dbReference type="GO" id="GO:0001671">
    <property type="term" value="F:ATPase activator activity"/>
    <property type="evidence" value="ECO:0007669"/>
    <property type="project" value="TreeGrafter"/>
</dbReference>
<dbReference type="GO" id="GO:0030007">
    <property type="term" value="P:intracellular potassium ion homeostasis"/>
    <property type="evidence" value="ECO:0007669"/>
    <property type="project" value="TreeGrafter"/>
</dbReference>
<dbReference type="GO" id="GO:0006883">
    <property type="term" value="P:intracellular sodium ion homeostasis"/>
    <property type="evidence" value="ECO:0007669"/>
    <property type="project" value="TreeGrafter"/>
</dbReference>
<dbReference type="GO" id="GO:1990573">
    <property type="term" value="P:potassium ion import across plasma membrane"/>
    <property type="evidence" value="ECO:0007669"/>
    <property type="project" value="TreeGrafter"/>
</dbReference>
<dbReference type="GO" id="GO:0036376">
    <property type="term" value="P:sodium ion export across plasma membrane"/>
    <property type="evidence" value="ECO:0007669"/>
    <property type="project" value="TreeGrafter"/>
</dbReference>
<dbReference type="FunFam" id="1.20.5.170:FF:000068">
    <property type="entry name" value="Sodium/potassium-transporting ATPase subunit beta"/>
    <property type="match status" value="1"/>
</dbReference>
<dbReference type="Gene3D" id="1.20.5.170">
    <property type="match status" value="1"/>
</dbReference>
<dbReference type="Gene3D" id="2.60.40.1660">
    <property type="entry name" value="Na, k-atpase alpha subunit"/>
    <property type="match status" value="1"/>
</dbReference>
<dbReference type="InterPro" id="IPR000402">
    <property type="entry name" value="Na/K_ATPase_sub_beta"/>
</dbReference>
<dbReference type="InterPro" id="IPR038702">
    <property type="entry name" value="Na/K_ATPase_sub_beta_sf"/>
</dbReference>
<dbReference type="NCBIfam" id="TIGR01107">
    <property type="entry name" value="Na_K_ATPase_bet"/>
    <property type="match status" value="1"/>
</dbReference>
<dbReference type="PANTHER" id="PTHR11523">
    <property type="entry name" value="SODIUM/POTASSIUM-DEPENDENT ATPASE BETA SUBUNIT"/>
    <property type="match status" value="1"/>
</dbReference>
<dbReference type="PANTHER" id="PTHR11523:SF26">
    <property type="entry name" value="SODIUM_POTASSIUM-TRANSPORTING ATPASE SUBUNIT BETA-2"/>
    <property type="match status" value="1"/>
</dbReference>
<dbReference type="Pfam" id="PF00287">
    <property type="entry name" value="Na_K-ATPase"/>
    <property type="match status" value="1"/>
</dbReference>
<dbReference type="PROSITE" id="PS00390">
    <property type="entry name" value="ATPASE_NA_K_BETA_1"/>
    <property type="match status" value="1"/>
</dbReference>
<dbReference type="PROSITE" id="PS00391">
    <property type="entry name" value="ATPASE_NA_K_BETA_2"/>
    <property type="match status" value="1"/>
</dbReference>
<accession>P43002</accession>
<organism>
    <name type="scientific">Rhinella marina</name>
    <name type="common">Cane toad</name>
    <name type="synonym">Bufo marinus</name>
    <dbReference type="NCBI Taxonomy" id="8386"/>
    <lineage>
        <taxon>Eukaryota</taxon>
        <taxon>Metazoa</taxon>
        <taxon>Chordata</taxon>
        <taxon>Craniata</taxon>
        <taxon>Vertebrata</taxon>
        <taxon>Euteleostomi</taxon>
        <taxon>Amphibia</taxon>
        <taxon>Batrachia</taxon>
        <taxon>Anura</taxon>
        <taxon>Neobatrachia</taxon>
        <taxon>Hyloidea</taxon>
        <taxon>Bufonidae</taxon>
        <taxon>Rhinella</taxon>
    </lineage>
</organism>
<evidence type="ECO:0000250" key="1"/>
<evidence type="ECO:0000255" key="2"/>
<evidence type="ECO:0000305" key="3"/>
<comment type="function">
    <text>This is the non-catalytic component of the active enzyme, which catalyzes the hydrolysis of ATP coupled with the exchange of Na(+) and K(+) ions across the plasma membrane. The exact function of this glycoprotein is not known. Some specific sequence of the beta subunit can modulate the activation of the Na,K-pump by extracellular potassium ions.</text>
</comment>
<comment type="subunit">
    <text evidence="3">The sodium/potassium-transporting ATPase is composed of a catalytic alpha subunit, an auxiliary non-catalytic beta subunit and an additional regulatory subunit.</text>
</comment>
<comment type="subcellular location">
    <subcellularLocation>
        <location evidence="3">Cell membrane</location>
        <topology>Single-pass type II membrane protein</topology>
    </subcellularLocation>
</comment>
<comment type="tissue specificity">
    <text>Expressed at a high level in bladder epithelial cells and eye and at a trace level in kidney; it is not detectable in significant amounts in the stomach, colon and small intestine.</text>
</comment>
<comment type="similarity">
    <text evidence="3">Belongs to the X(+)/potassium ATPases subunit beta family.</text>
</comment>
<keyword id="KW-1003">Cell membrane</keyword>
<keyword id="KW-1015">Disulfide bond</keyword>
<keyword id="KW-0325">Glycoprotein</keyword>
<keyword id="KW-0406">Ion transport</keyword>
<keyword id="KW-0472">Membrane</keyword>
<keyword id="KW-0630">Potassium</keyword>
<keyword id="KW-0633">Potassium transport</keyword>
<keyword id="KW-0735">Signal-anchor</keyword>
<keyword id="KW-0915">Sodium</keyword>
<keyword id="KW-0739">Sodium transport</keyword>
<keyword id="KW-0740">Sodium/potassium transport</keyword>
<keyword id="KW-0812">Transmembrane</keyword>
<keyword id="KW-1133">Transmembrane helix</keyword>
<keyword id="KW-0813">Transport</keyword>
<sequence length="299" mass="34288">MAALTQKKTCSQMMEEWKEFMWNPRTREFMGRTGSSWALILLFYVVFYAFLTAVFSLSLWVMLQTIDEYTPKYADRLANPGLMIRPKMDTTEVVYSTNGMNGTWQAYVDNLNSLLKDYNKTVQMERGVNCTPGVYNMQEDTGDVRNNPKKACWFFRDVLGDCSGVSDTTYGYQDGKPCVLIKMNRVINFLPVPIKELSNTSITIKCTAQNNDDLLGSIQYFPSVNNQSLGAIDLMYFPYYGNRAQQNYTQPFVAVKFLNATKGVDHMVECRVNAANINNQDPRDLYQGRVIFTMKIDRL</sequence>
<name>AT1B2_RHIMB</name>
<reference key="1">
    <citation type="journal article" date="1993" name="Pflugers Arch.">
        <title>Primary sequence and functional expression of a novel beta subunit of the P-ATPase gene family.</title>
        <authorList>
            <person name="Jaisser F."/>
            <person name="Horisberger J."/>
            <person name="Rossier B.C."/>
        </authorList>
    </citation>
    <scope>NUCLEOTIDE SEQUENCE [MRNA]</scope>
    <source>
        <tissue>Urinary bladder urothelium</tissue>
    </source>
</reference>